<comment type="function">
    <text>Exact function not known. Involved in copper resistance. Appears to be involved in copper uptake in conjunction with CopC.</text>
</comment>
<comment type="subcellular location">
    <subcellularLocation>
        <location evidence="2">Cell inner membrane</location>
        <topology evidence="2">Multi-pass membrane protein</topology>
    </subcellularLocation>
</comment>
<comment type="induction">
    <text>By copper.</text>
</comment>
<comment type="similarity">
    <text evidence="2">Belongs to the CopD family.</text>
</comment>
<protein>
    <recommendedName>
        <fullName>Copper resistance protein D</fullName>
    </recommendedName>
</protein>
<evidence type="ECO:0000255" key="1"/>
<evidence type="ECO:0000305" key="2"/>
<reference key="1">
    <citation type="journal article" date="1988" name="J. Bacteriol.">
        <title>Nucleotide sequence and organization of copper resistance genes from Pseudomonas syringae pv. tomato.</title>
        <authorList>
            <person name="Mellano M.A."/>
            <person name="Cooksey D.A."/>
        </authorList>
    </citation>
    <scope>NUCLEOTIDE SEQUENCE [GENOMIC DNA]</scope>
</reference>
<reference key="2">
    <citation type="journal article" date="1993" name="J. Bacteriol.">
        <title>A two-component regulatory system required for copper-inducible expression of the copper resistance operon of Pseudomonas syringae.</title>
        <authorList>
            <person name="Mills S.D."/>
            <person name="Jasalavich C.A."/>
            <person name="Cooksey D.A."/>
        </authorList>
    </citation>
    <scope>NUCLEOTIDE SEQUENCE [GENOMIC DNA] OF 281-310</scope>
</reference>
<proteinExistence type="evidence at transcript level"/>
<dbReference type="EMBL" id="M19930">
    <property type="protein sequence ID" value="AAA25809.1"/>
    <property type="molecule type" value="Genomic_DNA"/>
</dbReference>
<dbReference type="EMBL" id="L05176">
    <property type="protein sequence ID" value="AAA25802.1"/>
    <property type="molecule type" value="Genomic_DNA"/>
</dbReference>
<dbReference type="PIR" id="D32018">
    <property type="entry name" value="D32018"/>
</dbReference>
<dbReference type="RefSeq" id="WP_015062131.1">
    <property type="nucleotide sequence ID" value="NZ_SNVE01000046.1"/>
</dbReference>
<dbReference type="TCDB" id="9.B.62.1.2">
    <property type="family name" value="the copper resistance (copd) family"/>
</dbReference>
<dbReference type="GO" id="GO:0005886">
    <property type="term" value="C:plasma membrane"/>
    <property type="evidence" value="ECO:0007669"/>
    <property type="project" value="UniProtKB-SubCell"/>
</dbReference>
<dbReference type="GO" id="GO:0006825">
    <property type="term" value="P:copper ion transport"/>
    <property type="evidence" value="ECO:0007669"/>
    <property type="project" value="InterPro"/>
</dbReference>
<dbReference type="InterPro" id="IPR032694">
    <property type="entry name" value="CopC/D"/>
</dbReference>
<dbReference type="InterPro" id="IPR047689">
    <property type="entry name" value="CopD"/>
</dbReference>
<dbReference type="InterPro" id="IPR008457">
    <property type="entry name" value="Cu-R_CopD_dom"/>
</dbReference>
<dbReference type="NCBIfam" id="NF033808">
    <property type="entry name" value="copper_CopD"/>
    <property type="match status" value="1"/>
</dbReference>
<dbReference type="PANTHER" id="PTHR34820">
    <property type="entry name" value="INNER MEMBRANE PROTEIN YEBZ"/>
    <property type="match status" value="1"/>
</dbReference>
<dbReference type="PANTHER" id="PTHR34820:SF4">
    <property type="entry name" value="INNER MEMBRANE PROTEIN YEBZ"/>
    <property type="match status" value="1"/>
</dbReference>
<dbReference type="Pfam" id="PF05425">
    <property type="entry name" value="CopD"/>
    <property type="match status" value="1"/>
</dbReference>
<name>COPD_PSEUB</name>
<organism>
    <name type="scientific">Pseudomonas syringae pv. tomato</name>
    <dbReference type="NCBI Taxonomy" id="323"/>
    <lineage>
        <taxon>Bacteria</taxon>
        <taxon>Pseudomonadati</taxon>
        <taxon>Pseudomonadota</taxon>
        <taxon>Gammaproteobacteria</taxon>
        <taxon>Pseudomonadales</taxon>
        <taxon>Pseudomonadaceae</taxon>
        <taxon>Pseudomonas</taxon>
    </lineage>
</organism>
<accession>P12377</accession>
<geneLocation type="plasmid">
    <name>pPT23D</name>
</geneLocation>
<feature type="chain" id="PRO_0000218124" description="Copper resistance protein D">
    <location>
        <begin position="1"/>
        <end position="310"/>
    </location>
</feature>
<feature type="transmembrane region" description="Helical" evidence="1">
    <location>
        <begin position="11"/>
        <end position="31"/>
    </location>
</feature>
<feature type="transmembrane region" description="Helical" evidence="1">
    <location>
        <begin position="47"/>
        <end position="67"/>
    </location>
</feature>
<feature type="transmembrane region" description="Helical" evidence="1">
    <location>
        <begin position="92"/>
        <end position="112"/>
    </location>
</feature>
<feature type="transmembrane region" description="Helical" evidence="1">
    <location>
        <begin position="116"/>
        <end position="136"/>
    </location>
</feature>
<feature type="transmembrane region" description="Helical" evidence="1">
    <location>
        <begin position="157"/>
        <end position="177"/>
    </location>
</feature>
<feature type="transmembrane region" description="Helical" evidence="1">
    <location>
        <begin position="201"/>
        <end position="221"/>
    </location>
</feature>
<feature type="transmembrane region" description="Helical" evidence="1">
    <location>
        <begin position="233"/>
        <end position="253"/>
    </location>
</feature>
<feature type="transmembrane region" description="Helical" evidence="1">
    <location>
        <begin position="282"/>
        <end position="302"/>
    </location>
</feature>
<keyword id="KW-0997">Cell inner membrane</keyword>
<keyword id="KW-1003">Cell membrane</keyword>
<keyword id="KW-0186">Copper</keyword>
<keyword id="KW-0472">Membrane</keyword>
<keyword id="KW-0614">Plasmid</keyword>
<keyword id="KW-0812">Transmembrane</keyword>
<keyword id="KW-1133">Transmembrane helix</keyword>
<gene>
    <name type="primary">copD</name>
</gene>
<sequence>MEDPLSIAVRFALYTDLMMLFGLALFGLYSLRGAERRSGAVLPFRPLLSATALIGLLLSVVSIVLMAKAMSGASEWLEAVPHAEMMVTQTELGTAWLIRMAALVGAAVTIAFNLRVPMASLLMVSLLGGVALATLAWTGHGAMDEGSRRFWHFSADILHLWSSGGWFGALVAFALMLRPNKVETLQSVQVLSRTLSGFERAGAVIVAFIVLSGVVNYLFIVGPQVSGVVESTYGVLLLGKLALFGLMVGLASANRFVLSPAFERAVHRGEYARAARSIRYSMALELGAAVLVLGLIAWLGTLSPEMEAGM</sequence>